<name>RS18_CAMC1</name>
<keyword id="KW-0687">Ribonucleoprotein</keyword>
<keyword id="KW-0689">Ribosomal protein</keyword>
<keyword id="KW-0694">RNA-binding</keyword>
<keyword id="KW-0699">rRNA-binding</keyword>
<feature type="chain" id="PRO_1000003470" description="Small ribosomal subunit protein bS18">
    <location>
        <begin position="1"/>
        <end position="86"/>
    </location>
</feature>
<proteinExistence type="inferred from homology"/>
<accession>A7ZEF8</accession>
<dbReference type="EMBL" id="CP000792">
    <property type="protein sequence ID" value="EAT98715.1"/>
    <property type="molecule type" value="Genomic_DNA"/>
</dbReference>
<dbReference type="RefSeq" id="WP_012140074.1">
    <property type="nucleotide sequence ID" value="NC_009802.2"/>
</dbReference>
<dbReference type="SMR" id="A7ZEF8"/>
<dbReference type="STRING" id="360104.CCC13826_1996"/>
<dbReference type="KEGG" id="cco:CCC13826_1996"/>
<dbReference type="eggNOG" id="COG0238">
    <property type="taxonomic scope" value="Bacteria"/>
</dbReference>
<dbReference type="HOGENOM" id="CLU_148710_2_2_7"/>
<dbReference type="OrthoDB" id="9812008at2"/>
<dbReference type="Proteomes" id="UP000001121">
    <property type="component" value="Chromosome"/>
</dbReference>
<dbReference type="GO" id="GO:0022627">
    <property type="term" value="C:cytosolic small ribosomal subunit"/>
    <property type="evidence" value="ECO:0007669"/>
    <property type="project" value="TreeGrafter"/>
</dbReference>
<dbReference type="GO" id="GO:0070181">
    <property type="term" value="F:small ribosomal subunit rRNA binding"/>
    <property type="evidence" value="ECO:0007669"/>
    <property type="project" value="TreeGrafter"/>
</dbReference>
<dbReference type="GO" id="GO:0003735">
    <property type="term" value="F:structural constituent of ribosome"/>
    <property type="evidence" value="ECO:0007669"/>
    <property type="project" value="InterPro"/>
</dbReference>
<dbReference type="GO" id="GO:0006412">
    <property type="term" value="P:translation"/>
    <property type="evidence" value="ECO:0007669"/>
    <property type="project" value="UniProtKB-UniRule"/>
</dbReference>
<dbReference type="Gene3D" id="4.10.640.10">
    <property type="entry name" value="Ribosomal protein S18"/>
    <property type="match status" value="1"/>
</dbReference>
<dbReference type="HAMAP" id="MF_00270">
    <property type="entry name" value="Ribosomal_bS18"/>
    <property type="match status" value="1"/>
</dbReference>
<dbReference type="InterPro" id="IPR001648">
    <property type="entry name" value="Ribosomal_bS18"/>
</dbReference>
<dbReference type="InterPro" id="IPR036870">
    <property type="entry name" value="Ribosomal_bS18_sf"/>
</dbReference>
<dbReference type="NCBIfam" id="TIGR00165">
    <property type="entry name" value="S18"/>
    <property type="match status" value="1"/>
</dbReference>
<dbReference type="PANTHER" id="PTHR13479">
    <property type="entry name" value="30S RIBOSOMAL PROTEIN S18"/>
    <property type="match status" value="1"/>
</dbReference>
<dbReference type="PANTHER" id="PTHR13479:SF40">
    <property type="entry name" value="SMALL RIBOSOMAL SUBUNIT PROTEIN BS18M"/>
    <property type="match status" value="1"/>
</dbReference>
<dbReference type="Pfam" id="PF01084">
    <property type="entry name" value="Ribosomal_S18"/>
    <property type="match status" value="1"/>
</dbReference>
<dbReference type="PRINTS" id="PR00974">
    <property type="entry name" value="RIBOSOMALS18"/>
</dbReference>
<dbReference type="SUPFAM" id="SSF46911">
    <property type="entry name" value="Ribosomal protein S18"/>
    <property type="match status" value="1"/>
</dbReference>
<protein>
    <recommendedName>
        <fullName evidence="1">Small ribosomal subunit protein bS18</fullName>
    </recommendedName>
    <alternativeName>
        <fullName evidence="2">30S ribosomal protein S18</fullName>
    </alternativeName>
</protein>
<organism>
    <name type="scientific">Campylobacter concisus (strain 13826)</name>
    <dbReference type="NCBI Taxonomy" id="360104"/>
    <lineage>
        <taxon>Bacteria</taxon>
        <taxon>Pseudomonadati</taxon>
        <taxon>Campylobacterota</taxon>
        <taxon>Epsilonproteobacteria</taxon>
        <taxon>Campylobacterales</taxon>
        <taxon>Campylobacteraceae</taxon>
        <taxon>Campylobacter</taxon>
    </lineage>
</organism>
<sequence length="86" mass="10284">MAEKRKYSRKYCKFTEAKIDFIDYKDTSLLKYCLSERFKIMPRRLTGTSKRYQEMVEKAIKRARHAAIIPYIVDRKNVVSNPFEGL</sequence>
<reference key="1">
    <citation type="submission" date="2007-10" db="EMBL/GenBank/DDBJ databases">
        <title>Genome sequence of Campylobacter concisus 13826 isolated from human feces.</title>
        <authorList>
            <person name="Fouts D.E."/>
            <person name="Mongodin E.F."/>
            <person name="Puiu D."/>
            <person name="Sebastian Y."/>
            <person name="Miller W.G."/>
            <person name="Mandrell R.E."/>
            <person name="On S."/>
            <person name="Nelson K.E."/>
        </authorList>
    </citation>
    <scope>NUCLEOTIDE SEQUENCE [LARGE SCALE GENOMIC DNA]</scope>
    <source>
        <strain>13826</strain>
    </source>
</reference>
<evidence type="ECO:0000255" key="1">
    <source>
        <dbReference type="HAMAP-Rule" id="MF_00270"/>
    </source>
</evidence>
<evidence type="ECO:0000305" key="2"/>
<gene>
    <name evidence="1" type="primary">rpsR</name>
    <name type="ordered locus">Ccon26_13170</name>
    <name type="ORF">CCC13826_1996</name>
</gene>
<comment type="function">
    <text evidence="1">Binds as a heterodimer with protein bS6 to the central domain of the 16S rRNA, where it helps stabilize the platform of the 30S subunit.</text>
</comment>
<comment type="subunit">
    <text evidence="1">Part of the 30S ribosomal subunit. Forms a tight heterodimer with protein bS6.</text>
</comment>
<comment type="similarity">
    <text evidence="1">Belongs to the bacterial ribosomal protein bS18 family.</text>
</comment>